<organism>
    <name type="scientific">Haemophilus influenzae (strain ATCC 51907 / DSM 11121 / KW20 / Rd)</name>
    <dbReference type="NCBI Taxonomy" id="71421"/>
    <lineage>
        <taxon>Bacteria</taxon>
        <taxon>Pseudomonadati</taxon>
        <taxon>Pseudomonadota</taxon>
        <taxon>Gammaproteobacteria</taxon>
        <taxon>Pasteurellales</taxon>
        <taxon>Pasteurellaceae</taxon>
        <taxon>Haemophilus</taxon>
    </lineage>
</organism>
<feature type="chain" id="PRO_0000201789" description="UPF0352 protein HI_0840">
    <location>
        <begin position="1"/>
        <end position="72"/>
    </location>
</feature>
<feature type="helix" evidence="2">
    <location>
        <begin position="9"/>
        <end position="26"/>
    </location>
</feature>
<feature type="helix" evidence="2">
    <location>
        <begin position="31"/>
        <end position="45"/>
    </location>
</feature>
<feature type="helix" evidence="2">
    <location>
        <begin position="54"/>
        <end position="72"/>
    </location>
</feature>
<keyword id="KW-0002">3D-structure</keyword>
<keyword id="KW-1185">Reference proteome</keyword>
<dbReference type="EMBL" id="L42023">
    <property type="protein sequence ID" value="AAC22499.1"/>
    <property type="molecule type" value="Genomic_DNA"/>
</dbReference>
<dbReference type="PIR" id="E64159">
    <property type="entry name" value="E64159"/>
</dbReference>
<dbReference type="RefSeq" id="NP_439000.1">
    <property type="nucleotide sequence ID" value="NC_000907.1"/>
</dbReference>
<dbReference type="PDB" id="2JUZ">
    <property type="method" value="NMR"/>
    <property type="chains" value="A/B=1-72"/>
</dbReference>
<dbReference type="PDBsum" id="2JUZ"/>
<dbReference type="SMR" id="P44897"/>
<dbReference type="STRING" id="71421.HI_0840"/>
<dbReference type="EnsemblBacteria" id="AAC22499">
    <property type="protein sequence ID" value="AAC22499"/>
    <property type="gene ID" value="HI_0840"/>
</dbReference>
<dbReference type="KEGG" id="hin:HI_0840"/>
<dbReference type="PATRIC" id="fig|71421.8.peg.881"/>
<dbReference type="eggNOG" id="COG3082">
    <property type="taxonomic scope" value="Bacteria"/>
</dbReference>
<dbReference type="HOGENOM" id="CLU_175457_0_0_6"/>
<dbReference type="OrthoDB" id="5771474at2"/>
<dbReference type="PhylomeDB" id="P44897"/>
<dbReference type="BioCyc" id="HINF71421:G1GJ1-881-MONOMER"/>
<dbReference type="EvolutionaryTrace" id="P44897"/>
<dbReference type="Proteomes" id="UP000000579">
    <property type="component" value="Chromosome"/>
</dbReference>
<dbReference type="Gene3D" id="1.10.3390.10">
    <property type="entry name" value="YejL-like"/>
    <property type="match status" value="1"/>
</dbReference>
<dbReference type="HAMAP" id="MF_00816">
    <property type="entry name" value="UPF0352"/>
    <property type="match status" value="1"/>
</dbReference>
<dbReference type="InterPro" id="IPR009857">
    <property type="entry name" value="UPF0352"/>
</dbReference>
<dbReference type="InterPro" id="IPR023202">
    <property type="entry name" value="YejL_sf"/>
</dbReference>
<dbReference type="NCBIfam" id="NF010242">
    <property type="entry name" value="PRK13689.1"/>
    <property type="match status" value="1"/>
</dbReference>
<dbReference type="Pfam" id="PF07208">
    <property type="entry name" value="DUF1414"/>
    <property type="match status" value="1"/>
</dbReference>
<dbReference type="PIRSF" id="PIRSF006188">
    <property type="entry name" value="UCP006188"/>
    <property type="match status" value="1"/>
</dbReference>
<dbReference type="SUPFAM" id="SSF158651">
    <property type="entry name" value="YejL-like"/>
    <property type="match status" value="1"/>
</dbReference>
<proteinExistence type="evidence at protein level"/>
<protein>
    <recommendedName>
        <fullName evidence="1">UPF0352 protein HI_0840</fullName>
    </recommendedName>
</protein>
<name>Y840_HAEIN</name>
<accession>P44897</accession>
<comment type="similarity">
    <text evidence="1">Belongs to the UPF0352 family.</text>
</comment>
<reference key="1">
    <citation type="journal article" date="1995" name="Science">
        <title>Whole-genome random sequencing and assembly of Haemophilus influenzae Rd.</title>
        <authorList>
            <person name="Fleischmann R.D."/>
            <person name="Adams M.D."/>
            <person name="White O."/>
            <person name="Clayton R.A."/>
            <person name="Kirkness E.F."/>
            <person name="Kerlavage A.R."/>
            <person name="Bult C.J."/>
            <person name="Tomb J.-F."/>
            <person name="Dougherty B.A."/>
            <person name="Merrick J.M."/>
            <person name="McKenney K."/>
            <person name="Sutton G.G."/>
            <person name="FitzHugh W."/>
            <person name="Fields C.A."/>
            <person name="Gocayne J.D."/>
            <person name="Scott J.D."/>
            <person name="Shirley R."/>
            <person name="Liu L.-I."/>
            <person name="Glodek A."/>
            <person name="Kelley J.M."/>
            <person name="Weidman J.F."/>
            <person name="Phillips C.A."/>
            <person name="Spriggs T."/>
            <person name="Hedblom E."/>
            <person name="Cotton M.D."/>
            <person name="Utterback T.R."/>
            <person name="Hanna M.C."/>
            <person name="Nguyen D.T."/>
            <person name="Saudek D.M."/>
            <person name="Brandon R.C."/>
            <person name="Fine L.D."/>
            <person name="Fritchman J.L."/>
            <person name="Fuhrmann J.L."/>
            <person name="Geoghagen N.S.M."/>
            <person name="Gnehm C.L."/>
            <person name="McDonald L.A."/>
            <person name="Small K.V."/>
            <person name="Fraser C.M."/>
            <person name="Smith H.O."/>
            <person name="Venter J.C."/>
        </authorList>
    </citation>
    <scope>NUCLEOTIDE SEQUENCE [LARGE SCALE GENOMIC DNA]</scope>
    <source>
        <strain>ATCC 51907 / DSM 11121 / KW20 / Rd</strain>
    </source>
</reference>
<evidence type="ECO:0000255" key="1">
    <source>
        <dbReference type="HAMAP-Rule" id="MF_00816"/>
    </source>
</evidence>
<evidence type="ECO:0007829" key="2">
    <source>
        <dbReference type="PDB" id="2JUZ"/>
    </source>
</evidence>
<gene>
    <name type="ordered locus">HI_0840</name>
</gene>
<sequence>MAQHSKYSDAQLSAIVNDMIAVLEKHKAPVDLSLIALGNMASNLLTTSVPQTQCEALAQAFSNSLINAVKTR</sequence>